<name>RS8_SYNJA</name>
<evidence type="ECO:0000255" key="1">
    <source>
        <dbReference type="HAMAP-Rule" id="MF_01302"/>
    </source>
</evidence>
<evidence type="ECO:0000305" key="2"/>
<keyword id="KW-0687">Ribonucleoprotein</keyword>
<keyword id="KW-0689">Ribosomal protein</keyword>
<keyword id="KW-0694">RNA-binding</keyword>
<keyword id="KW-0699">rRNA-binding</keyword>
<proteinExistence type="inferred from homology"/>
<feature type="chain" id="PRO_0000290952" description="Small ribosomal subunit protein uS8">
    <location>
        <begin position="1"/>
        <end position="134"/>
    </location>
</feature>
<dbReference type="EMBL" id="CP000239">
    <property type="protein sequence ID" value="ABC99353.1"/>
    <property type="molecule type" value="Genomic_DNA"/>
</dbReference>
<dbReference type="RefSeq" id="WP_011430034.1">
    <property type="nucleotide sequence ID" value="NC_007775.1"/>
</dbReference>
<dbReference type="SMR" id="Q2JQN3"/>
<dbReference type="STRING" id="321327.CYA_1165"/>
<dbReference type="KEGG" id="cya:CYA_1165"/>
<dbReference type="eggNOG" id="COG0096">
    <property type="taxonomic scope" value="Bacteria"/>
</dbReference>
<dbReference type="HOGENOM" id="CLU_098428_0_2_3"/>
<dbReference type="OrthoDB" id="9802617at2"/>
<dbReference type="Proteomes" id="UP000008818">
    <property type="component" value="Chromosome"/>
</dbReference>
<dbReference type="GO" id="GO:1990904">
    <property type="term" value="C:ribonucleoprotein complex"/>
    <property type="evidence" value="ECO:0007669"/>
    <property type="project" value="UniProtKB-KW"/>
</dbReference>
<dbReference type="GO" id="GO:0005840">
    <property type="term" value="C:ribosome"/>
    <property type="evidence" value="ECO:0007669"/>
    <property type="project" value="UniProtKB-KW"/>
</dbReference>
<dbReference type="GO" id="GO:0019843">
    <property type="term" value="F:rRNA binding"/>
    <property type="evidence" value="ECO:0007669"/>
    <property type="project" value="UniProtKB-UniRule"/>
</dbReference>
<dbReference type="GO" id="GO:0003735">
    <property type="term" value="F:structural constituent of ribosome"/>
    <property type="evidence" value="ECO:0007669"/>
    <property type="project" value="InterPro"/>
</dbReference>
<dbReference type="GO" id="GO:0006412">
    <property type="term" value="P:translation"/>
    <property type="evidence" value="ECO:0007669"/>
    <property type="project" value="UniProtKB-UniRule"/>
</dbReference>
<dbReference type="FunFam" id="3.30.1370.30:FF:000002">
    <property type="entry name" value="30S ribosomal protein S8"/>
    <property type="match status" value="1"/>
</dbReference>
<dbReference type="FunFam" id="3.30.1490.10:FF:000001">
    <property type="entry name" value="30S ribosomal protein S8"/>
    <property type="match status" value="1"/>
</dbReference>
<dbReference type="Gene3D" id="3.30.1370.30">
    <property type="match status" value="1"/>
</dbReference>
<dbReference type="Gene3D" id="3.30.1490.10">
    <property type="match status" value="1"/>
</dbReference>
<dbReference type="HAMAP" id="MF_01302_B">
    <property type="entry name" value="Ribosomal_uS8_B"/>
    <property type="match status" value="1"/>
</dbReference>
<dbReference type="InterPro" id="IPR000630">
    <property type="entry name" value="Ribosomal_uS8"/>
</dbReference>
<dbReference type="InterPro" id="IPR047863">
    <property type="entry name" value="Ribosomal_uS8_CS"/>
</dbReference>
<dbReference type="InterPro" id="IPR035987">
    <property type="entry name" value="Ribosomal_uS8_sf"/>
</dbReference>
<dbReference type="NCBIfam" id="NF001109">
    <property type="entry name" value="PRK00136.1"/>
    <property type="match status" value="1"/>
</dbReference>
<dbReference type="PANTHER" id="PTHR11758">
    <property type="entry name" value="40S RIBOSOMAL PROTEIN S15A"/>
    <property type="match status" value="1"/>
</dbReference>
<dbReference type="Pfam" id="PF00410">
    <property type="entry name" value="Ribosomal_S8"/>
    <property type="match status" value="1"/>
</dbReference>
<dbReference type="SUPFAM" id="SSF56047">
    <property type="entry name" value="Ribosomal protein S8"/>
    <property type="match status" value="1"/>
</dbReference>
<dbReference type="PROSITE" id="PS00053">
    <property type="entry name" value="RIBOSOMAL_S8"/>
    <property type="match status" value="1"/>
</dbReference>
<protein>
    <recommendedName>
        <fullName evidence="1">Small ribosomal subunit protein uS8</fullName>
    </recommendedName>
    <alternativeName>
        <fullName evidence="2">30S ribosomal protein S8</fullName>
    </alternativeName>
</protein>
<comment type="function">
    <text evidence="1">One of the primary rRNA binding proteins, it binds directly to 16S rRNA central domain where it helps coordinate assembly of the platform of the 30S subunit.</text>
</comment>
<comment type="subunit">
    <text evidence="1">Part of the 30S ribosomal subunit. Contacts proteins S5 and S12.</text>
</comment>
<comment type="similarity">
    <text evidence="1">Belongs to the universal ribosomal protein uS8 family.</text>
</comment>
<accession>Q2JQN3</accession>
<gene>
    <name evidence="1" type="primary">rpsH</name>
    <name evidence="1" type="synonym">rps8</name>
    <name type="ordered locus">CYA_1165</name>
</gene>
<reference key="1">
    <citation type="journal article" date="2007" name="ISME J.">
        <title>Population level functional diversity in a microbial community revealed by comparative genomic and metagenomic analyses.</title>
        <authorList>
            <person name="Bhaya D."/>
            <person name="Grossman A.R."/>
            <person name="Steunou A.-S."/>
            <person name="Khuri N."/>
            <person name="Cohan F.M."/>
            <person name="Hamamura N."/>
            <person name="Melendrez M.C."/>
            <person name="Bateson M.M."/>
            <person name="Ward D.M."/>
            <person name="Heidelberg J.F."/>
        </authorList>
    </citation>
    <scope>NUCLEOTIDE SEQUENCE [LARGE SCALE GENOMIC DNA]</scope>
    <source>
        <strain>JA-3-3Ab</strain>
    </source>
</reference>
<organism>
    <name type="scientific">Synechococcus sp. (strain JA-3-3Ab)</name>
    <name type="common">Cyanobacteria bacterium Yellowstone A-Prime</name>
    <dbReference type="NCBI Taxonomy" id="321327"/>
    <lineage>
        <taxon>Bacteria</taxon>
        <taxon>Bacillati</taxon>
        <taxon>Cyanobacteriota</taxon>
        <taxon>Cyanophyceae</taxon>
        <taxon>Synechococcales</taxon>
        <taxon>Synechococcaceae</taxon>
        <taxon>Synechococcus</taxon>
    </lineage>
</organism>
<sequence>MAHTNDTIADMLTRIRNATMARHESVAVPATRMTRSIARVLHEEGFVSDWKEEGEGIHAQLVLRLKYKGKGRKPIINGLKRVSRPGLRVYCNHKELPRVLGGIGIAIISTSNGIMTDRDARKQGIGGEVLCYVY</sequence>